<reference key="1">
    <citation type="submission" date="2005-12" db="EMBL/GenBank/DDBJ databases">
        <authorList>
            <consortium name="NIH - Mammalian Gene Collection (MGC) project"/>
        </authorList>
    </citation>
    <scope>NUCLEOTIDE SEQUENCE [LARGE SCALE MRNA]</scope>
    <source>
        <strain>Crossbred X Angus</strain>
        <tissue>Liver</tissue>
    </source>
</reference>
<gene>
    <name type="primary">NMB</name>
</gene>
<name>NMB_BOVIN</name>
<feature type="signal peptide" evidence="1">
    <location>
        <begin position="1"/>
        <end position="24"/>
    </location>
</feature>
<feature type="peptide" id="PRO_0000236255" description="Neuromedin-B-32" evidence="1">
    <location>
        <begin position="25"/>
        <end position="56"/>
    </location>
</feature>
<feature type="peptide" id="PRO_0000236256" description="Neuromedin-B" evidence="1">
    <location>
        <begin position="47"/>
        <end position="56"/>
    </location>
</feature>
<feature type="propeptide" id="PRO_0000236257" evidence="1">
    <location>
        <begin position="60"/>
        <end position="121"/>
    </location>
</feature>
<feature type="region of interest" description="Disordered" evidence="3">
    <location>
        <begin position="61"/>
        <end position="80"/>
    </location>
</feature>
<feature type="modified residue" description="Methionine amide" evidence="1">
    <location>
        <position position="56"/>
    </location>
</feature>
<comment type="function">
    <text evidence="1 2">Stimulates smooth muscle contraction (By similarity). Induces sighing by acting directly on the pre-Botzinger complex, a cluster of several thousand neurons in the ventrolateral medulla responsible for inspiration during respiratory activity (By similarity). Contributes to the induction of sneezing following exposure to chemical irritants or allergens which causes release of NMB by nasal sensory neurons and activation of NMBR-expressing neurons in the sneeze-evoking region of the brainstem (By similarity). These in turn activate neurons of the caudal ventral respiratory group, giving rise to the sneezing response (By similarity). Contributes to induction of acute itch, possibly through activation of the NMBR receptor on dorsal root ganglion neurons (By similarity). Increases expression of NMBR and steroidogenic mediators STAR, CYP11A1 and HSD3B1 in Leydig cells, induces secretion of testosterone by Leydig cells and also promotes Leydig cell proliferation (By similarity). Plays a role in the innate immune response to influenza A virus infection by enhancing interferon alpha expression and reducing expression of IL6 (By similarity). Plays a role in CSF1-induced proliferation of osteoclast precursors by contributing to the positive regulation of the expression of the CSF1 receptor CSF1R (By similarity).</text>
</comment>
<comment type="subcellular location">
    <subcellularLocation>
        <location evidence="2">Secreted</location>
    </subcellularLocation>
    <subcellularLocation>
        <location evidence="2">Cell projection</location>
        <location evidence="2">Neuron projection</location>
    </subcellularLocation>
    <text evidence="2">In neurons of the retrotrapezoid nucleus//parafacial respiratory group, expressed on neuron projections which project into the pre-Botzinger complex.</text>
</comment>
<comment type="similarity">
    <text evidence="4">Belongs to the bombesin/neuromedin-B/ranatensin family.</text>
</comment>
<organism>
    <name type="scientific">Bos taurus</name>
    <name type="common">Bovine</name>
    <dbReference type="NCBI Taxonomy" id="9913"/>
    <lineage>
        <taxon>Eukaryota</taxon>
        <taxon>Metazoa</taxon>
        <taxon>Chordata</taxon>
        <taxon>Craniata</taxon>
        <taxon>Vertebrata</taxon>
        <taxon>Euteleostomi</taxon>
        <taxon>Mammalia</taxon>
        <taxon>Eutheria</taxon>
        <taxon>Laurasiatheria</taxon>
        <taxon>Artiodactyla</taxon>
        <taxon>Ruminantia</taxon>
        <taxon>Pecora</taxon>
        <taxon>Bovidae</taxon>
        <taxon>Bovinae</taxon>
        <taxon>Bos</taxon>
    </lineage>
</organism>
<dbReference type="EMBL" id="BC111259">
    <property type="protein sequence ID" value="AAI11260.1"/>
    <property type="molecule type" value="mRNA"/>
</dbReference>
<dbReference type="RefSeq" id="NP_001068738.1">
    <property type="nucleotide sequence ID" value="NM_001075270.2"/>
</dbReference>
<dbReference type="FunCoup" id="Q2T9U8">
    <property type="interactions" value="62"/>
</dbReference>
<dbReference type="PaxDb" id="9913-ENSBTAP00000001825"/>
<dbReference type="GeneID" id="506584"/>
<dbReference type="KEGG" id="bta:506584"/>
<dbReference type="CTD" id="4828"/>
<dbReference type="eggNOG" id="ENOG502S66V">
    <property type="taxonomic scope" value="Eukaryota"/>
</dbReference>
<dbReference type="InParanoid" id="Q2T9U8"/>
<dbReference type="OrthoDB" id="9535999at2759"/>
<dbReference type="Proteomes" id="UP000009136">
    <property type="component" value="Unplaced"/>
</dbReference>
<dbReference type="GO" id="GO:0005615">
    <property type="term" value="C:extracellular space"/>
    <property type="evidence" value="ECO:0000250"/>
    <property type="project" value="UniProtKB"/>
</dbReference>
<dbReference type="GO" id="GO:0043005">
    <property type="term" value="C:neuron projection"/>
    <property type="evidence" value="ECO:0000250"/>
    <property type="project" value="UniProtKB"/>
</dbReference>
<dbReference type="GO" id="GO:0031710">
    <property type="term" value="F:neuromedin B receptor binding"/>
    <property type="evidence" value="ECO:0000318"/>
    <property type="project" value="GO_Central"/>
</dbReference>
<dbReference type="GO" id="GO:0005184">
    <property type="term" value="F:neuropeptide hormone activity"/>
    <property type="evidence" value="ECO:0000318"/>
    <property type="project" value="GO_Central"/>
</dbReference>
<dbReference type="GO" id="GO:0140374">
    <property type="term" value="P:antiviral innate immune response"/>
    <property type="evidence" value="ECO:0000250"/>
    <property type="project" value="UniProtKB"/>
</dbReference>
<dbReference type="GO" id="GO:0160024">
    <property type="term" value="P:Leydig cell proliferation"/>
    <property type="evidence" value="ECO:0000250"/>
    <property type="project" value="UniProtKB"/>
</dbReference>
<dbReference type="GO" id="GO:0032715">
    <property type="term" value="P:negative regulation of interleukin-6 production"/>
    <property type="evidence" value="ECO:0000250"/>
    <property type="project" value="UniProtKB"/>
</dbReference>
<dbReference type="GO" id="GO:0007218">
    <property type="term" value="P:neuropeptide signaling pathway"/>
    <property type="evidence" value="ECO:0007669"/>
    <property type="project" value="InterPro"/>
</dbReference>
<dbReference type="GO" id="GO:0046887">
    <property type="term" value="P:positive regulation of hormone secretion"/>
    <property type="evidence" value="ECO:0000318"/>
    <property type="project" value="GO_Central"/>
</dbReference>
<dbReference type="GO" id="GO:0032727">
    <property type="term" value="P:positive regulation of interferon-alpha production"/>
    <property type="evidence" value="ECO:0000250"/>
    <property type="project" value="UniProtKB"/>
</dbReference>
<dbReference type="GO" id="GO:0090290">
    <property type="term" value="P:positive regulation of osteoclast proliferation"/>
    <property type="evidence" value="ECO:0000250"/>
    <property type="project" value="UniProtKB"/>
</dbReference>
<dbReference type="GO" id="GO:1903942">
    <property type="term" value="P:positive regulation of respiratory gaseous exchange"/>
    <property type="evidence" value="ECO:0000250"/>
    <property type="project" value="UniProtKB"/>
</dbReference>
<dbReference type="GO" id="GO:2000845">
    <property type="term" value="P:positive regulation of testosterone secretion"/>
    <property type="evidence" value="ECO:0000250"/>
    <property type="project" value="UniProtKB"/>
</dbReference>
<dbReference type="GO" id="GO:0160025">
    <property type="term" value="P:sensory perception of itch"/>
    <property type="evidence" value="ECO:0000250"/>
    <property type="project" value="UniProtKB"/>
</dbReference>
<dbReference type="GO" id="GO:0160023">
    <property type="term" value="P:sneeze reflex"/>
    <property type="evidence" value="ECO:0000250"/>
    <property type="project" value="UniProtKB"/>
</dbReference>
<dbReference type="InterPro" id="IPR000874">
    <property type="entry name" value="Bombesin"/>
</dbReference>
<dbReference type="PANTHER" id="PTHR16866">
    <property type="entry name" value="GASTRIN-RELEASING PEPTIDE"/>
    <property type="match status" value="1"/>
</dbReference>
<dbReference type="PANTHER" id="PTHR16866:SF3">
    <property type="entry name" value="NEUROMEDIN-B"/>
    <property type="match status" value="1"/>
</dbReference>
<dbReference type="Pfam" id="PF02044">
    <property type="entry name" value="Bombesin"/>
    <property type="match status" value="1"/>
</dbReference>
<dbReference type="PROSITE" id="PS00257">
    <property type="entry name" value="BOMBESIN"/>
    <property type="match status" value="1"/>
</dbReference>
<sequence>MTLRAVGVRLLGGLLLFALLAAGAAPLGWDLPESRSRASKIRVHPRGNLWATGHFMGKKSLEPPSPSLLGTAPHTSLRDQTPQLSHHLLRVLLQKQALGMSLSVPAPNTQHRRLLVQTLQK</sequence>
<accession>Q2T9U8</accession>
<proteinExistence type="evidence at transcript level"/>
<protein>
    <recommendedName>
        <fullName>Neuromedin-B</fullName>
    </recommendedName>
    <component>
        <recommendedName>
            <fullName>Neuromedin-B-32</fullName>
        </recommendedName>
    </component>
    <component>
        <recommendedName>
            <fullName>Neuromedin-B</fullName>
        </recommendedName>
    </component>
</protein>
<evidence type="ECO:0000250" key="1">
    <source>
        <dbReference type="UniProtKB" id="P01297"/>
    </source>
</evidence>
<evidence type="ECO:0000250" key="2">
    <source>
        <dbReference type="UniProtKB" id="Q9CR53"/>
    </source>
</evidence>
<evidence type="ECO:0000256" key="3">
    <source>
        <dbReference type="SAM" id="MobiDB-lite"/>
    </source>
</evidence>
<evidence type="ECO:0000305" key="4"/>
<keyword id="KW-0027">Amidation</keyword>
<keyword id="KW-0966">Cell projection</keyword>
<keyword id="KW-0165">Cleavage on pair of basic residues</keyword>
<keyword id="KW-0391">Immunity</keyword>
<keyword id="KW-0399">Innate immunity</keyword>
<keyword id="KW-1185">Reference proteome</keyword>
<keyword id="KW-0964">Secreted</keyword>
<keyword id="KW-0732">Signal</keyword>